<feature type="signal peptide" evidence="1">
    <location>
        <begin position="1"/>
        <end position="22"/>
    </location>
</feature>
<feature type="chain" id="PRO_0000006584" description="Cytochrome c-552">
    <location>
        <begin position="23"/>
        <end position="507"/>
    </location>
</feature>
<feature type="binding site" description="axial binding residue" evidence="9 10 11 12 13 14 15 16 17">
    <location>
        <position position="102"/>
    </location>
    <ligand>
        <name>heme c</name>
        <dbReference type="ChEBI" id="CHEBI:61717"/>
        <label>3</label>
    </ligand>
    <ligandPart>
        <name>Fe</name>
        <dbReference type="ChEBI" id="CHEBI:18248"/>
    </ligandPart>
</feature>
<feature type="binding site" description="covalent" evidence="9 10 11 12 13 14 15 16 17">
    <location>
        <position position="130"/>
    </location>
    <ligand>
        <name>heme c</name>
        <dbReference type="ChEBI" id="CHEBI:61717"/>
        <label>1</label>
    </ligand>
</feature>
<feature type="binding site" description="covalent" evidence="9 10 11 12 13 14 15 16 17">
    <location>
        <position position="133"/>
    </location>
    <ligand>
        <name>heme c</name>
        <dbReference type="ChEBI" id="CHEBI:61717"/>
        <label>1</label>
    </ligand>
</feature>
<feature type="binding site" description="axial binding residue" evidence="9 10 11 12 13 14 15 16 17">
    <location>
        <position position="134"/>
    </location>
    <ligand>
        <name>heme c</name>
        <dbReference type="ChEBI" id="CHEBI:61717"/>
        <label>1</label>
    </ligand>
    <ligandPart>
        <name>Fe</name>
        <dbReference type="ChEBI" id="CHEBI:18248"/>
    </ligandPart>
</feature>
<feature type="binding site" description="covalent" evidence="9 10 11 12 13 14 15 16 17">
    <location>
        <position position="168"/>
    </location>
    <ligand>
        <name>heme c</name>
        <dbReference type="ChEBI" id="CHEBI:61717"/>
        <label>2</label>
    </ligand>
</feature>
<feature type="binding site" description="covalent" evidence="9 10 11 12 13 14 15 16 17">
    <location>
        <position position="171"/>
    </location>
    <ligand>
        <name>heme c</name>
        <dbReference type="ChEBI" id="CHEBI:61717"/>
        <label>2</label>
    </ligand>
</feature>
<feature type="binding site" description="axial binding residue" evidence="9 10 11 12 13 14 15 16 17">
    <location>
        <position position="172"/>
    </location>
    <ligand>
        <name>heme c</name>
        <dbReference type="ChEBI" id="CHEBI:61717"/>
        <label>2</label>
    </ligand>
    <ligandPart>
        <name>Fe</name>
        <dbReference type="ChEBI" id="CHEBI:18248"/>
    </ligandPart>
</feature>
<feature type="binding site" description="covalent" evidence="9 10 11 12 13 14 15 16 17">
    <location>
        <position position="211"/>
    </location>
    <ligand>
        <name>heme c</name>
        <dbReference type="ChEBI" id="CHEBI:61717"/>
        <label>3</label>
    </ligand>
</feature>
<feature type="binding site" description="covalent" evidence="9 10 11 12 13 14 15 16 17">
    <location>
        <position position="214"/>
    </location>
    <ligand>
        <name>heme c</name>
        <dbReference type="ChEBI" id="CHEBI:61717"/>
        <label>3</label>
    </ligand>
</feature>
<feature type="binding site" description="axial binding residue" evidence="9 10 11 12 13 14 15 16 17">
    <location>
        <position position="215"/>
    </location>
    <ligand>
        <name>heme c</name>
        <dbReference type="ChEBI" id="CHEBI:61717"/>
        <label>3</label>
    </ligand>
    <ligandPart>
        <name>Fe</name>
        <dbReference type="ChEBI" id="CHEBI:18248"/>
    </ligandPart>
</feature>
<feature type="binding site" evidence="9 10 11 12 13 14 15 16 17">
    <location>
        <position position="217"/>
    </location>
    <ligand>
        <name>Ca(2+)</name>
        <dbReference type="ChEBI" id="CHEBI:29108"/>
    </ligand>
</feature>
<feature type="binding site" evidence="9 10 11 12 13 14">
    <location>
        <position position="218"/>
    </location>
    <ligand>
        <name>Ca(2+)</name>
        <dbReference type="ChEBI" id="CHEBI:29108"/>
    </ligand>
</feature>
<feature type="binding site" evidence="5 14">
    <location>
        <position position="218"/>
    </location>
    <ligand>
        <name>substrate</name>
    </ligand>
</feature>
<feature type="binding site" evidence="9 10 11 12 13 14 15 16 17">
    <location>
        <position position="274"/>
    </location>
    <ligand>
        <name>Ca(2+)</name>
        <dbReference type="ChEBI" id="CHEBI:29108"/>
    </ligand>
</feature>
<feature type="binding site" evidence="9 10 11 12 13 14 15 16 17">
    <location>
        <position position="276"/>
    </location>
    <ligand>
        <name>Ca(2+)</name>
        <dbReference type="ChEBI" id="CHEBI:29108"/>
    </ligand>
</feature>
<feature type="binding site" evidence="5 14">
    <location>
        <position position="277"/>
    </location>
    <ligand>
        <name>substrate</name>
    </ligand>
</feature>
<feature type="binding site" description="axial binding residue" evidence="9 10 11 12 13 14 15 16 17">
    <location>
        <position position="288"/>
    </location>
    <ligand>
        <name>heme c</name>
        <dbReference type="ChEBI" id="CHEBI:61717"/>
        <label>5</label>
    </ligand>
    <ligandPart>
        <name>Fe</name>
        <dbReference type="ChEBI" id="CHEBI:18248"/>
    </ligandPart>
</feature>
<feature type="binding site" description="covalent" evidence="9 10 11 12 13 14 15 16 17">
    <location>
        <position position="295"/>
    </location>
    <ligand>
        <name>heme c</name>
        <dbReference type="ChEBI" id="CHEBI:61717"/>
        <label>4</label>
    </ligand>
</feature>
<feature type="binding site" description="covalent" evidence="9 10 11 12 13 14 15 16 17">
    <location>
        <position position="298"/>
    </location>
    <ligand>
        <name>heme c</name>
        <dbReference type="ChEBI" id="CHEBI:61717"/>
        <label>4</label>
    </ligand>
</feature>
<feature type="binding site" description="axial binding residue" evidence="9 10 11 12 13 14 15 16 17">
    <location>
        <position position="299"/>
    </location>
    <ligand>
        <name>heme c</name>
        <dbReference type="ChEBI" id="CHEBI:61717"/>
        <label>4</label>
    </ligand>
    <ligandPart>
        <name>Fe</name>
        <dbReference type="ChEBI" id="CHEBI:18248"/>
    </ligandPart>
</feature>
<feature type="binding site" description="axial binding residue" evidence="9 10 11 12 13 14 15 16 17">
    <location>
        <position position="313"/>
    </location>
    <ligand>
        <name>heme c</name>
        <dbReference type="ChEBI" id="CHEBI:61717"/>
        <label>2</label>
    </ligand>
    <ligandPart>
        <name>Fe</name>
        <dbReference type="ChEBI" id="CHEBI:18248"/>
    </ligandPart>
</feature>
<feature type="binding site" description="covalent" evidence="9 10 11 12 13 14 15 16 17">
    <location>
        <position position="326"/>
    </location>
    <ligand>
        <name>heme c</name>
        <dbReference type="ChEBI" id="CHEBI:61717"/>
        <label>5</label>
    </ligand>
</feature>
<feature type="binding site" description="covalent" evidence="9 10 11 12 13 14 15 16 17">
    <location>
        <position position="329"/>
    </location>
    <ligand>
        <name>heme c</name>
        <dbReference type="ChEBI" id="CHEBI:61717"/>
        <label>5</label>
    </ligand>
</feature>
<feature type="binding site" description="axial binding residue" evidence="9 10 11 12 13 14 15 16 17">
    <location>
        <position position="330"/>
    </location>
    <ligand>
        <name>heme c</name>
        <dbReference type="ChEBI" id="CHEBI:61717"/>
        <label>5</label>
    </ligand>
    <ligandPart>
        <name>Fe</name>
        <dbReference type="ChEBI" id="CHEBI:18248"/>
    </ligandPart>
</feature>
<feature type="binding site" description="axial binding residue" evidence="9 10 11 12 13 14 15 16 17">
    <location>
        <position position="405"/>
    </location>
    <ligand>
        <name>heme c</name>
        <dbReference type="ChEBI" id="CHEBI:61717"/>
        <label>4</label>
    </ligand>
    <ligandPart>
        <name>Fe</name>
        <dbReference type="ChEBI" id="CHEBI:18248"/>
    </ligandPart>
</feature>
<feature type="mutagenesis site" description="Reduces nitrite reductase activity by over 99%, but does not decrease the low sulfite reductase activity." evidence="4">
    <original>Y</original>
    <variation>F</variation>
    <location>
        <position position="218"/>
    </location>
</feature>
<feature type="sequence conflict" description="In Ref. 1; CAB53160." evidence="5" ref="1">
    <original>E</original>
    <variation>K</variation>
    <location>
        <position position="45"/>
    </location>
</feature>
<feature type="turn" evidence="20">
    <location>
        <begin position="39"/>
        <end position="42"/>
    </location>
</feature>
<feature type="turn" evidence="20">
    <location>
        <begin position="45"/>
        <end position="48"/>
    </location>
</feature>
<feature type="helix" evidence="20">
    <location>
        <begin position="50"/>
        <end position="53"/>
    </location>
</feature>
<feature type="turn" evidence="20">
    <location>
        <begin position="54"/>
        <end position="56"/>
    </location>
</feature>
<feature type="helix" evidence="20">
    <location>
        <begin position="58"/>
        <end position="65"/>
    </location>
</feature>
<feature type="helix" evidence="20">
    <location>
        <begin position="66"/>
        <end position="69"/>
    </location>
</feature>
<feature type="helix" evidence="20">
    <location>
        <begin position="76"/>
        <end position="79"/>
    </location>
</feature>
<feature type="helix" evidence="20">
    <location>
        <begin position="82"/>
        <end position="86"/>
    </location>
</feature>
<feature type="turn" evidence="20">
    <location>
        <begin position="87"/>
        <end position="89"/>
    </location>
</feature>
<feature type="helix" evidence="20">
    <location>
        <begin position="91"/>
        <end position="93"/>
    </location>
</feature>
<feature type="helix" evidence="20">
    <location>
        <begin position="102"/>
        <end position="104"/>
    </location>
</feature>
<feature type="helix" evidence="20">
    <location>
        <begin position="105"/>
        <end position="111"/>
    </location>
</feature>
<feature type="helix" evidence="20">
    <location>
        <begin position="113"/>
        <end position="115"/>
    </location>
</feature>
<feature type="strand" evidence="20">
    <location>
        <begin position="124"/>
        <end position="127"/>
    </location>
</feature>
<feature type="helix" evidence="20">
    <location>
        <begin position="128"/>
        <end position="131"/>
    </location>
</feature>
<feature type="turn" evidence="18">
    <location>
        <begin position="132"/>
        <end position="134"/>
    </location>
</feature>
<feature type="helix" evidence="20">
    <location>
        <begin position="137"/>
        <end position="145"/>
    </location>
</feature>
<feature type="helix" evidence="20">
    <location>
        <begin position="147"/>
        <end position="150"/>
    </location>
</feature>
<feature type="strand" evidence="20">
    <location>
        <begin position="152"/>
        <end position="154"/>
    </location>
</feature>
<feature type="helix" evidence="20">
    <location>
        <begin position="155"/>
        <end position="158"/>
    </location>
</feature>
<feature type="turn" evidence="20">
    <location>
        <begin position="159"/>
        <end position="161"/>
    </location>
</feature>
<feature type="helix" evidence="20">
    <location>
        <begin position="168"/>
        <end position="171"/>
    </location>
</feature>
<feature type="turn" evidence="20">
    <location>
        <begin position="174"/>
        <end position="176"/>
    </location>
</feature>
<feature type="helix" evidence="20">
    <location>
        <begin position="185"/>
        <end position="192"/>
    </location>
</feature>
<feature type="turn" evidence="20">
    <location>
        <begin position="198"/>
        <end position="200"/>
    </location>
</feature>
<feature type="helix" evidence="20">
    <location>
        <begin position="203"/>
        <end position="212"/>
    </location>
</feature>
<feature type="strand" evidence="20">
    <location>
        <begin position="219"/>
        <end position="226"/>
    </location>
</feature>
<feature type="strand" evidence="20">
    <location>
        <begin position="232"/>
        <end position="239"/>
    </location>
</feature>
<feature type="helix" evidence="20">
    <location>
        <begin position="248"/>
        <end position="257"/>
    </location>
</feature>
<feature type="strand" evidence="20">
    <location>
        <begin position="262"/>
        <end position="264"/>
    </location>
</feature>
<feature type="turn" evidence="20">
    <location>
        <begin position="266"/>
        <end position="268"/>
    </location>
</feature>
<feature type="helix" evidence="20">
    <location>
        <begin position="279"/>
        <end position="283"/>
    </location>
</feature>
<feature type="helix" evidence="20">
    <location>
        <begin position="287"/>
        <end position="290"/>
    </location>
</feature>
<feature type="helix" evidence="20">
    <location>
        <begin position="295"/>
        <end position="299"/>
    </location>
</feature>
<feature type="strand" evidence="20">
    <location>
        <begin position="302"/>
        <end position="305"/>
    </location>
</feature>
<feature type="strand" evidence="20">
    <location>
        <begin position="308"/>
        <end position="311"/>
    </location>
</feature>
<feature type="helix" evidence="20">
    <location>
        <begin position="318"/>
        <end position="321"/>
    </location>
</feature>
<feature type="helix" evidence="20">
    <location>
        <begin position="322"/>
        <end position="325"/>
    </location>
</feature>
<feature type="turn" evidence="20">
    <location>
        <begin position="326"/>
        <end position="329"/>
    </location>
</feature>
<feature type="helix" evidence="20">
    <location>
        <begin position="334"/>
        <end position="372"/>
    </location>
</feature>
<feature type="helix" evidence="20">
    <location>
        <begin position="376"/>
        <end position="397"/>
    </location>
</feature>
<feature type="helix" evidence="20">
    <location>
        <begin position="402"/>
        <end position="405"/>
    </location>
</feature>
<feature type="helix" evidence="20">
    <location>
        <begin position="407"/>
        <end position="434"/>
    </location>
</feature>
<feature type="helix" evidence="20">
    <location>
        <begin position="448"/>
        <end position="454"/>
    </location>
</feature>
<feature type="helix" evidence="20">
    <location>
        <begin position="459"/>
        <end position="471"/>
    </location>
</feature>
<feature type="helix" evidence="20">
    <location>
        <begin position="473"/>
        <end position="483"/>
    </location>
</feature>
<feature type="helix" evidence="20">
    <location>
        <begin position="489"/>
        <end position="492"/>
    </location>
</feature>
<feature type="turn" evidence="20">
    <location>
        <begin position="493"/>
        <end position="496"/>
    </location>
</feature>
<feature type="strand" evidence="19">
    <location>
        <begin position="503"/>
        <end position="505"/>
    </location>
</feature>
<dbReference type="EC" id="1.7.2.2" evidence="4"/>
<dbReference type="EMBL" id="AJ245540">
    <property type="protein sequence ID" value="CAB53160.1"/>
    <property type="molecule type" value="Genomic_DNA"/>
</dbReference>
<dbReference type="EMBL" id="BX571659">
    <property type="protein sequence ID" value="CAE10072.1"/>
    <property type="molecule type" value="Genomic_DNA"/>
</dbReference>
<dbReference type="RefSeq" id="WP_011138866.1">
    <property type="nucleotide sequence ID" value="NC_005090.1"/>
</dbReference>
<dbReference type="PDB" id="1FS7">
    <property type="method" value="X-ray"/>
    <property type="resolution" value="1.60 A"/>
    <property type="chains" value="A=23-507"/>
</dbReference>
<dbReference type="PDB" id="1FS8">
    <property type="method" value="X-ray"/>
    <property type="resolution" value="1.60 A"/>
    <property type="chains" value="A=23-507"/>
</dbReference>
<dbReference type="PDB" id="1FS9">
    <property type="method" value="X-ray"/>
    <property type="resolution" value="2.00 A"/>
    <property type="chains" value="A=1-507"/>
</dbReference>
<dbReference type="PDB" id="2E80">
    <property type="method" value="X-ray"/>
    <property type="resolution" value="1.60 A"/>
    <property type="chains" value="A=23-507"/>
</dbReference>
<dbReference type="PDB" id="2E81">
    <property type="method" value="X-ray"/>
    <property type="resolution" value="2.00 A"/>
    <property type="chains" value="A=23-507"/>
</dbReference>
<dbReference type="PDB" id="3BNF">
    <property type="method" value="X-ray"/>
    <property type="resolution" value="1.70 A"/>
    <property type="chains" value="A=23-507"/>
</dbReference>
<dbReference type="PDB" id="3BNG">
    <property type="method" value="X-ray"/>
    <property type="resolution" value="1.50 A"/>
    <property type="chains" value="A=23-507"/>
</dbReference>
<dbReference type="PDB" id="3BNH">
    <property type="method" value="X-ray"/>
    <property type="resolution" value="1.75 A"/>
    <property type="chains" value="A=23-507"/>
</dbReference>
<dbReference type="PDB" id="3BNJ">
    <property type="method" value="X-ray"/>
    <property type="resolution" value="1.30 A"/>
    <property type="chains" value="A=23-507"/>
</dbReference>
<dbReference type="PDBsum" id="1FS7"/>
<dbReference type="PDBsum" id="1FS8"/>
<dbReference type="PDBsum" id="1FS9"/>
<dbReference type="PDBsum" id="2E80"/>
<dbReference type="PDBsum" id="2E81"/>
<dbReference type="PDBsum" id="3BNF"/>
<dbReference type="PDBsum" id="3BNG"/>
<dbReference type="PDBsum" id="3BNH"/>
<dbReference type="PDBsum" id="3BNJ"/>
<dbReference type="SMR" id="Q9S1E5"/>
<dbReference type="STRING" id="273121.WS0969"/>
<dbReference type="KEGG" id="wsu:WS0969"/>
<dbReference type="eggNOG" id="COG3303">
    <property type="taxonomic scope" value="Bacteria"/>
</dbReference>
<dbReference type="HOGENOM" id="CLU_035040_1_0_7"/>
<dbReference type="BRENDA" id="1.7.2.2">
    <property type="organism ID" value="6642"/>
</dbReference>
<dbReference type="UniPathway" id="UPA00653"/>
<dbReference type="EvolutionaryTrace" id="Q9S1E5"/>
<dbReference type="Proteomes" id="UP000000422">
    <property type="component" value="Chromosome"/>
</dbReference>
<dbReference type="GO" id="GO:0030288">
    <property type="term" value="C:outer membrane-bounded periplasmic space"/>
    <property type="evidence" value="ECO:0000314"/>
    <property type="project" value="UniProtKB"/>
</dbReference>
<dbReference type="GO" id="GO:0005509">
    <property type="term" value="F:calcium ion binding"/>
    <property type="evidence" value="ECO:0007669"/>
    <property type="project" value="InterPro"/>
</dbReference>
<dbReference type="GO" id="GO:0020037">
    <property type="term" value="F:heme binding"/>
    <property type="evidence" value="ECO:0007669"/>
    <property type="project" value="InterPro"/>
</dbReference>
<dbReference type="GO" id="GO:0042279">
    <property type="term" value="F:nitrite reductase (cytochrome, ammonia-forming) activity"/>
    <property type="evidence" value="ECO:0007669"/>
    <property type="project" value="UniProtKB-EC"/>
</dbReference>
<dbReference type="GO" id="GO:0019645">
    <property type="term" value="P:anaerobic electron transport chain"/>
    <property type="evidence" value="ECO:0007669"/>
    <property type="project" value="TreeGrafter"/>
</dbReference>
<dbReference type="GO" id="GO:0009061">
    <property type="term" value="P:anaerobic respiration"/>
    <property type="evidence" value="ECO:0000314"/>
    <property type="project" value="UniProtKB"/>
</dbReference>
<dbReference type="GO" id="GO:0042128">
    <property type="term" value="P:nitrate assimilation"/>
    <property type="evidence" value="ECO:0007669"/>
    <property type="project" value="UniProtKB-UniPathway"/>
</dbReference>
<dbReference type="CDD" id="cd00548">
    <property type="entry name" value="NrfA-like"/>
    <property type="match status" value="1"/>
</dbReference>
<dbReference type="FunFam" id="1.20.140.10:FF:000014">
    <property type="entry name" value="Cytochrome c-552"/>
    <property type="match status" value="1"/>
</dbReference>
<dbReference type="Gene3D" id="1.20.140.10">
    <property type="entry name" value="Butyryl-CoA Dehydrogenase, subunit A, domain 3"/>
    <property type="match status" value="1"/>
</dbReference>
<dbReference type="Gene3D" id="1.10.1130.10">
    <property type="entry name" value="Flavocytochrome C3, Chain A"/>
    <property type="match status" value="1"/>
</dbReference>
<dbReference type="HAMAP" id="MF_01182">
    <property type="entry name" value="Cytochrom_C552"/>
    <property type="match status" value="1"/>
</dbReference>
<dbReference type="InterPro" id="IPR003321">
    <property type="entry name" value="Cyt_c552"/>
</dbReference>
<dbReference type="InterPro" id="IPR017570">
    <property type="entry name" value="Cyt_c_NO2Rdtase_formate-dep"/>
</dbReference>
<dbReference type="InterPro" id="IPR036280">
    <property type="entry name" value="Multihaem_cyt_sf"/>
</dbReference>
<dbReference type="NCBIfam" id="NF008339">
    <property type="entry name" value="PRK11125.1"/>
    <property type="match status" value="1"/>
</dbReference>
<dbReference type="PANTHER" id="PTHR30633:SF0">
    <property type="entry name" value="CYTOCHROME C-552"/>
    <property type="match status" value="1"/>
</dbReference>
<dbReference type="PANTHER" id="PTHR30633">
    <property type="entry name" value="CYTOCHROME C-552 RESPIRATORY NITRITE REDUCTASE"/>
    <property type="match status" value="1"/>
</dbReference>
<dbReference type="Pfam" id="PF02335">
    <property type="entry name" value="Cytochrom_C552"/>
    <property type="match status" value="1"/>
</dbReference>
<dbReference type="PIRSF" id="PIRSF000243">
    <property type="entry name" value="Cyt_c552"/>
    <property type="match status" value="1"/>
</dbReference>
<dbReference type="SUPFAM" id="SSF48695">
    <property type="entry name" value="Multiheme cytochromes"/>
    <property type="match status" value="1"/>
</dbReference>
<dbReference type="PROSITE" id="PS51008">
    <property type="entry name" value="MULTIHEME_CYTC"/>
    <property type="match status" value="1"/>
</dbReference>
<comment type="function">
    <text evidence="1 4">Catalyzes the reduction of nitrite to ammonia, consuming six electrons in the process. Has very low activity toward hydroxylamine, and even lower activity toward sulfite. Sulfite reductase activity is maximal at neutral pH.</text>
</comment>
<comment type="catalytic activity">
    <reaction evidence="4">
        <text>6 Fe(III)-[cytochrome c] + NH4(+) + 2 H2O = 6 Fe(II)-[cytochrome c] + nitrite + 8 H(+)</text>
        <dbReference type="Rhea" id="RHEA:13089"/>
        <dbReference type="Rhea" id="RHEA-COMP:10350"/>
        <dbReference type="Rhea" id="RHEA-COMP:14399"/>
        <dbReference type="ChEBI" id="CHEBI:15377"/>
        <dbReference type="ChEBI" id="CHEBI:15378"/>
        <dbReference type="ChEBI" id="CHEBI:16301"/>
        <dbReference type="ChEBI" id="CHEBI:28938"/>
        <dbReference type="ChEBI" id="CHEBI:29033"/>
        <dbReference type="ChEBI" id="CHEBI:29034"/>
        <dbReference type="EC" id="1.7.2.2"/>
    </reaction>
</comment>
<comment type="cofactor">
    <cofactor evidence="2 3 4">
        <name>Ca(2+)</name>
        <dbReference type="ChEBI" id="CHEBI:29108"/>
    </cofactor>
    <text evidence="2 3 4">Binds 1 Ca(2+) ion per monomer.</text>
</comment>
<comment type="cofactor">
    <cofactor evidence="2 3 4">
        <name>heme c</name>
        <dbReference type="ChEBI" id="CHEBI:61717"/>
    </cofactor>
    <text evidence="2 3 4">Binds 5 heme c groups covalently per monomer.</text>
</comment>
<comment type="pathway">
    <text>Nitrogen metabolism; nitrate reduction (assimilation).</text>
</comment>
<comment type="subunit">
    <text evidence="1 2 3 7">Homodimer (PubMed:10984487, PubMed:12296741). Interacts with NrfH (PubMed:10672190). May form a heterotetramer with NrfH (PubMed:11807271).</text>
</comment>
<comment type="subcellular location">
    <subcellularLocation>
        <location evidence="1 6 8">Periplasm</location>
    </subcellularLocation>
</comment>
<comment type="similarity">
    <text evidence="5">Belongs to the cytochrome c-552 family.</text>
</comment>
<keyword id="KW-0002">3D-structure</keyword>
<keyword id="KW-0106">Calcium</keyword>
<keyword id="KW-0903">Direct protein sequencing</keyword>
<keyword id="KW-0249">Electron transport</keyword>
<keyword id="KW-0349">Heme</keyword>
<keyword id="KW-0408">Iron</keyword>
<keyword id="KW-0479">Metal-binding</keyword>
<keyword id="KW-0560">Oxidoreductase</keyword>
<keyword id="KW-0574">Periplasm</keyword>
<keyword id="KW-1185">Reference proteome</keyword>
<keyword id="KW-0732">Signal</keyword>
<keyword id="KW-0813">Transport</keyword>
<reference key="1">
    <citation type="journal article" date="2000" name="Mol. Microbiol.">
        <title>A NapC/NirT-type cytochrome c (NrfH) is the mediator between the quinone pool and the cytochrome c nitrite reductase of Wolinella succinogenes.</title>
        <authorList>
            <person name="Simon J."/>
            <person name="Gross R."/>
            <person name="Einsle O."/>
            <person name="Kroneck P.M.H."/>
            <person name="Kroeger A."/>
            <person name="Klimmek O."/>
        </authorList>
    </citation>
    <scope>NUCLEOTIDE SEQUENCE [GENOMIC DNA]</scope>
    <scope>PROTEIN SEQUENCE OF 23-30</scope>
    <scope>FUNCTION</scope>
    <scope>SUBCELLULAR LOCATION</scope>
    <scope>SUBUNIT</scope>
</reference>
<reference key="2">
    <citation type="journal article" date="2003" name="Proc. Natl. Acad. Sci. U.S.A.">
        <title>Complete genome sequence and analysis of Wolinella succinogenes.</title>
        <authorList>
            <person name="Baar C."/>
            <person name="Eppinger M."/>
            <person name="Raddatz G."/>
            <person name="Simon J."/>
            <person name="Lanz C."/>
            <person name="Klimmek O."/>
            <person name="Nandakumar R."/>
            <person name="Gross R."/>
            <person name="Rosinus A."/>
            <person name="Keller H."/>
            <person name="Jagtap P."/>
            <person name="Linke B."/>
            <person name="Meyer F."/>
            <person name="Lederer H."/>
            <person name="Schuster S.C."/>
        </authorList>
    </citation>
    <scope>NUCLEOTIDE SEQUENCE [LARGE SCALE GENOMIC DNA]</scope>
    <source>
        <strain>ATCC 29543 / DSM 1740 / CCUG 13145 / JCM 31913 / LMG 7466 / NCTC 11488 / FDC 602W</strain>
    </source>
</reference>
<reference key="3">
    <citation type="journal article" date="2002" name="Acta Crystallogr. D">
        <title>Crystallization and preliminary X-ray analysis of the membrane-bound cytochrome c nitrite reductase complex (NrfHA) from Wolinella succinogenes.</title>
        <authorList>
            <person name="Einsle O."/>
            <person name="Stach P."/>
            <person name="Messerschmidt A."/>
            <person name="Klimmek O."/>
            <person name="Simon J."/>
            <person name="Kroeger A."/>
            <person name="Kroneck P.M."/>
        </authorList>
    </citation>
    <scope>SUBUNIT</scope>
</reference>
<reference evidence="9 10 11" key="4">
    <citation type="journal article" date="2000" name="J. Biol. Chem.">
        <title>Cytochrome c nitrite reductase from Wolinella succinogenes. Structure at 1.6 A resolution, inhibitor binding, and heme-packing motifs.</title>
        <authorList>
            <person name="Einsle O."/>
            <person name="Stach P."/>
            <person name="Messerschmidt A."/>
            <person name="Simon J."/>
            <person name="Kroeger A."/>
            <person name="Huber R."/>
            <person name="Kroneck P.M.H."/>
        </authorList>
    </citation>
    <scope>X-RAY CRYSTALLOGRAPHY (1.60 ANGSTROMS) OF 23-507 IN COMPLEX WITH CALCIUM AND HEME</scope>
    <scope>COFACTOR</scope>
    <scope>SUBUNIT</scope>
    <scope>SUBCELLULAR LOCATION</scope>
</reference>
<reference key="5">
    <citation type="journal article" date="2002" name="J. Am. Chem. Soc.">
        <title>Mechanism of the six-electron reduction of nitrite to ammonia by cytochrome c nitrite reductase.</title>
        <authorList>
            <person name="Einsle O."/>
            <person name="Messerschmidt A."/>
            <person name="Huber R."/>
            <person name="Kroneck P.M."/>
            <person name="Neese F."/>
        </authorList>
    </citation>
    <scope>X-RAY CRYSTALLOGRAPHY (1.60 ANGSTROMS) OF 23-507 IN COMPLEX WITH NITRITE; CALCIUM AND HEME</scope>
    <scope>SUBUNIT</scope>
    <scope>SUBCELLULAR LOCATION</scope>
    <scope>COFACTOR</scope>
</reference>
<reference evidence="14 15 16 17" key="6">
    <citation type="journal article" date="2008" name="Biochemistry">
        <title>Binding and reduction of sulfite by cytochrome c nitrite reductase.</title>
        <authorList>
            <person name="Lukat P."/>
            <person name="Rudolf M."/>
            <person name="Stach P."/>
            <person name="Messerschmidt A."/>
            <person name="Kroneck P.M."/>
            <person name="Simon J."/>
            <person name="Einsle O."/>
        </authorList>
    </citation>
    <scope>X-RAY CRYSTALLOGRAPHY (1.30 ANGSTROMS) OF 23-507 IN COMPLEX WITH CALCIUM; HEME AND HYDROGENSULFITE</scope>
    <scope>FUNCTION</scope>
    <scope>CATALYTIC ACTIVITY</scope>
    <scope>MUTAGENESIS OF TYR-218</scope>
</reference>
<evidence type="ECO:0000269" key="1">
    <source>
    </source>
</evidence>
<evidence type="ECO:0000269" key="2">
    <source>
    </source>
</evidence>
<evidence type="ECO:0000269" key="3">
    <source>
    </source>
</evidence>
<evidence type="ECO:0000269" key="4">
    <source>
    </source>
</evidence>
<evidence type="ECO:0000305" key="5"/>
<evidence type="ECO:0000305" key="6">
    <source>
    </source>
</evidence>
<evidence type="ECO:0000305" key="7">
    <source>
    </source>
</evidence>
<evidence type="ECO:0000305" key="8">
    <source>
    </source>
</evidence>
<evidence type="ECO:0007744" key="9">
    <source>
        <dbReference type="PDB" id="1FS7"/>
    </source>
</evidence>
<evidence type="ECO:0007744" key="10">
    <source>
        <dbReference type="PDB" id="1FS8"/>
    </source>
</evidence>
<evidence type="ECO:0007744" key="11">
    <source>
        <dbReference type="PDB" id="1FS9"/>
    </source>
</evidence>
<evidence type="ECO:0007744" key="12">
    <source>
        <dbReference type="PDB" id="2E80"/>
    </source>
</evidence>
<evidence type="ECO:0007744" key="13">
    <source>
        <dbReference type="PDB" id="2E81"/>
    </source>
</evidence>
<evidence type="ECO:0007744" key="14">
    <source>
        <dbReference type="PDB" id="3BNF"/>
    </source>
</evidence>
<evidence type="ECO:0007744" key="15">
    <source>
        <dbReference type="PDB" id="3BNG"/>
    </source>
</evidence>
<evidence type="ECO:0007744" key="16">
    <source>
        <dbReference type="PDB" id="3BNH"/>
    </source>
</evidence>
<evidence type="ECO:0007744" key="17">
    <source>
        <dbReference type="PDB" id="3BNJ"/>
    </source>
</evidence>
<evidence type="ECO:0007829" key="18">
    <source>
        <dbReference type="PDB" id="1FS7"/>
    </source>
</evidence>
<evidence type="ECO:0007829" key="19">
    <source>
        <dbReference type="PDB" id="1FS8"/>
    </source>
</evidence>
<evidence type="ECO:0007829" key="20">
    <source>
        <dbReference type="PDB" id="3BNJ"/>
    </source>
</evidence>
<name>NRFA_WOLSU</name>
<organism>
    <name type="scientific">Wolinella succinogenes (strain ATCC 29543 / DSM 1740 / CCUG 13145 / JCM 31913 / LMG 7466 / NCTC 11488 / FDC 602W)</name>
    <name type="common">Vibrio succinogenes</name>
    <dbReference type="NCBI Taxonomy" id="273121"/>
    <lineage>
        <taxon>Bacteria</taxon>
        <taxon>Pseudomonadati</taxon>
        <taxon>Campylobacterota</taxon>
        <taxon>Epsilonproteobacteria</taxon>
        <taxon>Campylobacterales</taxon>
        <taxon>Helicobacteraceae</taxon>
        <taxon>Wolinella</taxon>
    </lineage>
</organism>
<sequence length="507" mass="57511">MTKFKLLLAGSLVAIVSMGLLASNINEREKERVALNKTAHSQGIEGKAMSEEWARYYPRQFDSWKKTKESDNITDMLKEKPALVVAWAGYPFSKDYNAPRGHYYALQDNINTLRTGAPVDGKTGPLPSACWTCKSPDVPRIIEQDGELEYFTGKWAKYGDEIVNTIGCYNCHDDKSAELKSKVPYLDRGLSAAGFKTFAESTHQEKRSLVCAQCHVEYYFKKTEWKDDKGVDKTAMVVTLPWSKGISTEQMEAYYDEINFADWTHGISKTPMLKAQHPDWELYKTGIHGQKGVSCADCHMPYTQEGAVKYSDHKVGNPLDNMDKSCMNCHRESEQKLKDIVKQKFERKEFLQDIAFDNIGKAHLETGKAMELGATDAELKEIRTHIRHAQWRADMAIAGHGSFFHAPEEVLRLLASGNEEAQKARIKLVKVLAKYGAIDYVAPDFETKEKAQKLAKVDMEAFIAEKLKFKQTLEQEWKKQAIAKGRLNPESLKGVDEKSSYYDKTKK</sequence>
<protein>
    <recommendedName>
        <fullName>Cytochrome c-552</fullName>
        <ecNumber evidence="4">1.7.2.2</ecNumber>
    </recommendedName>
    <alternativeName>
        <fullName>Ammonia-forming cytochrome c nitrite reductase</fullName>
        <shortName>Cytochrome c nitrite reductase</shortName>
    </alternativeName>
</protein>
<proteinExistence type="evidence at protein level"/>
<accession>Q9S1E5</accession>
<gene>
    <name type="primary">nrfA</name>
    <name type="ordered locus">WS0969</name>
</gene>